<name>PRIM_VZVO</name>
<feature type="chain" id="PRO_0000385150" description="DNA primase">
    <location>
        <begin position="1"/>
        <end position="1083"/>
    </location>
</feature>
<feature type="zinc finger region" description="CHC2-type" evidence="1">
    <location>
        <begin position="1022"/>
        <end position="1061"/>
    </location>
</feature>
<feature type="site" description="Essential for primase activity" evidence="1">
    <location>
        <position position="669"/>
    </location>
</feature>
<feature type="site" description="Essential for primase activity" evidence="1">
    <location>
        <position position="671"/>
    </location>
</feature>
<feature type="sequence conflict" description="In Ref. 1." evidence="2" ref="1">
    <original>P</original>
    <variation>S</variation>
    <location>
        <position position="945"/>
    </location>
</feature>
<gene>
    <name type="ORF">ORF6</name>
</gene>
<organism>
    <name type="scientific">Varicella-zoster virus (strain Oka vaccine)</name>
    <name type="common">HHV-3</name>
    <name type="synonym">Human herpesvirus 3</name>
    <dbReference type="NCBI Taxonomy" id="341980"/>
    <lineage>
        <taxon>Viruses</taxon>
        <taxon>Duplodnaviria</taxon>
        <taxon>Heunggongvirae</taxon>
        <taxon>Peploviricota</taxon>
        <taxon>Herviviricetes</taxon>
        <taxon>Herpesvirales</taxon>
        <taxon>Orthoherpesviridae</taxon>
        <taxon>Alphaherpesvirinae</taxon>
        <taxon>Varicellovirus</taxon>
        <taxon>Varicellovirus humanalpha3</taxon>
        <taxon>Human herpesvirus 3</taxon>
    </lineage>
</organism>
<accession>Q4JQW9</accession>
<accession>Q4JQZ2</accession>
<comment type="function">
    <text evidence="1">Essential component of the helicase/primase complex. Unwinds the DNA at the replication forks and generates single-stranded DNA for both leading and lagging strand synthesis. The primase initiates primer synthesis and thereby produces large amount of short RNA primers on the lagging strand that the polymerase elongates using dNTPs.</text>
</comment>
<comment type="subunit">
    <text evidence="1">Associates with the helicase and the primase-associated factor to form the helicase-primase factor.</text>
</comment>
<comment type="subcellular location">
    <subcellularLocation>
        <location evidence="1">Host nucleus</location>
    </subcellularLocation>
    <text evidence="1">Requires the presence of the primase associated factor to properly localize in the host cell nucleus.</text>
</comment>
<comment type="similarity">
    <text evidence="1">Belongs to the herpesviridae DNA primase family.</text>
</comment>
<keyword id="KW-0235">DNA replication</keyword>
<keyword id="KW-1048">Host nucleus</keyword>
<keyword id="KW-0479">Metal-binding</keyword>
<keyword id="KW-0808">Transferase</keyword>
<keyword id="KW-0862">Zinc</keyword>
<keyword id="KW-0863">Zinc-finger</keyword>
<sequence length="1083" mass="122590">MDKSSKPTIRLLFATKGCAISHSLLLLTGQISTEPLYVVSYTWTPDLDDVFVKNGREEITQVIPTKRPREVTENDEENQIMHLFCSRDVNVIFYLIGGFSTGDVRSRVWPIFFCCFKTQTDFKALYKALWYGAPLNPHIISDTLCISETFDIHSEVIQTLMVTTHHLNRKGLSDNGLCITEATLCKLVKKSVGRQELTSLYAHYERQVLAAYRRLYWGYGCSPFWYIVRFGPSEKTLVLATRYYLLQTDTSYNTLETPLYDLQAIKDLFLTYQVPALPNCSGYNISDLLSFDKLSMFCCSSTYTRGLTAKNALSYILQRIHTDTTEIHAVSEYITNDRKGLKVPDREFVDYIYLAHFECFNRKQIADHLQAVTYSDFVNKPVLLKSSNLGKRATANFFNHVRSRLNMRDYIKKNVICDVTELGPEIGHKYTITKTYTLSLTYAAKPSKFIGVCDLATTLTRRVENIEKQFSPYGWSSTIPSNPPGFDELSNFEDSVVSAEALRAANFANDTPNQSGRTGFDTSPGITKLLLFFSAATGIATHDVSILSYKTPLEALIGHSEVTGPMPVYRVALPQGAQAFAVIANDTWSSITNRYTLPHEARLIAEDLKQINPCNFVAASLRDMQLTLLLSTSVKNVSKISSNIPKDQLYINRNELFNTNLIITNLILDVDFHIRKPIPLGILHAGMRAFRHGILTAMQLLFPKAVVNPNKDPCYFYKTACPEPTVEVLDDDNLLDITSHSDIDFYIENGELYTCVEENYTEDVWFFDTQTTSEVHTHADVSNNENLHETLPCNCKEKIGFRVCVPIPNPYALVGSSTLKGFAQILQQAVLLEREFVEYIGPYLRDFSFIDTGVYSHGHSLRLPFFSKVTTTGTAVGQLLPFYVVPEQCIDILAFVTSHRNPANFHFHSRPQSNVPVQFILHNLGGEYAEFFERKVARNKQIFSPPQISLTKALKERGVTCLDAFTLEAFVDSTILESIVEHIAVHFPGRDREYTLTSSKCIAIKRDWVLFQLICGTKGFTCLRYPHRGGRTAPRTFVSLRVDHHNRLCISLAQQCFATKCDSNRMHTIFTLEVPNYPNLTSS</sequence>
<protein>
    <recommendedName>
        <fullName evidence="1">DNA primase</fullName>
        <ecNumber evidence="1">2.7.7.-</ecNumber>
    </recommendedName>
</protein>
<evidence type="ECO:0000255" key="1">
    <source>
        <dbReference type="HAMAP-Rule" id="MF_04011"/>
    </source>
</evidence>
<evidence type="ECO:0000305" key="2"/>
<organismHost>
    <name type="scientific">Homo sapiens</name>
    <name type="common">Human</name>
    <dbReference type="NCBI Taxonomy" id="9606"/>
</organismHost>
<dbReference type="EC" id="2.7.7.-" evidence="1"/>
<dbReference type="EMBL" id="AB097932">
    <property type="status" value="NOT_ANNOTATED_CDS"/>
    <property type="molecule type" value="Genomic_DNA"/>
</dbReference>
<dbReference type="EMBL" id="AB097933">
    <property type="status" value="NOT_ANNOTATED_CDS"/>
    <property type="molecule type" value="Genomic_DNA"/>
</dbReference>
<dbReference type="EMBL" id="DQ008354">
    <property type="protein sequence ID" value="AAY57682.1"/>
    <property type="molecule type" value="Genomic_DNA"/>
</dbReference>
<dbReference type="EMBL" id="DQ008355">
    <property type="protein sequence ID" value="AAY57753.1"/>
    <property type="molecule type" value="Genomic_DNA"/>
</dbReference>
<dbReference type="IntAct" id="Q4JQW9">
    <property type="interactions" value="2"/>
</dbReference>
<dbReference type="ChEMBL" id="CHEMBL4523677"/>
<dbReference type="Proteomes" id="UP000002603">
    <property type="component" value="Genome"/>
</dbReference>
<dbReference type="Proteomes" id="UP000008504">
    <property type="component" value="Genome"/>
</dbReference>
<dbReference type="Proteomes" id="UP000008505">
    <property type="component" value="Genome"/>
</dbReference>
<dbReference type="Proteomes" id="UP000008506">
    <property type="component" value="Genome"/>
</dbReference>
<dbReference type="GO" id="GO:0042025">
    <property type="term" value="C:host cell nucleus"/>
    <property type="evidence" value="ECO:0007669"/>
    <property type="project" value="UniProtKB-SubCell"/>
</dbReference>
<dbReference type="GO" id="GO:0003899">
    <property type="term" value="F:DNA-directed RNA polymerase activity"/>
    <property type="evidence" value="ECO:0007669"/>
    <property type="project" value="InterPro"/>
</dbReference>
<dbReference type="GO" id="GO:0008270">
    <property type="term" value="F:zinc ion binding"/>
    <property type="evidence" value="ECO:0007669"/>
    <property type="project" value="UniProtKB-KW"/>
</dbReference>
<dbReference type="GO" id="GO:0039686">
    <property type="term" value="P:bidirectional double-stranded viral DNA replication"/>
    <property type="evidence" value="ECO:0007669"/>
    <property type="project" value="InterPro"/>
</dbReference>
<dbReference type="GO" id="GO:0006260">
    <property type="term" value="P:DNA replication"/>
    <property type="evidence" value="ECO:0007669"/>
    <property type="project" value="UniProtKB-KW"/>
</dbReference>
<dbReference type="HAMAP" id="MF_04011">
    <property type="entry name" value="HSV_PRIM"/>
    <property type="match status" value="1"/>
</dbReference>
<dbReference type="InterPro" id="IPR033685">
    <property type="entry name" value="HSV_PRIM"/>
</dbReference>
<dbReference type="Pfam" id="PF03121">
    <property type="entry name" value="Herpes_UL52"/>
    <property type="match status" value="1"/>
</dbReference>
<reference key="1">
    <citation type="journal article" date="2002" name="J. Virol.">
        <title>Comparison of the complete DNA sequences of the Oka varicella vaccine and its parental virus.</title>
        <authorList>
            <person name="Gomi Y."/>
            <person name="Sunamachi H."/>
            <person name="Mori Y."/>
            <person name="Nagaike K."/>
            <person name="Takahashi M."/>
            <person name="Yamanishi K."/>
        </authorList>
    </citation>
    <scope>NUCLEOTIDE SEQUENCE [LARGE SCALE GENOMIC DNA]</scope>
    <source>
        <strain>Isolate Human/Japan/P-Oka/1970</strain>
        <strain>Oka varicella vaccine Biken (V-Oka-Biken)</strain>
    </source>
</reference>
<reference key="2">
    <citation type="journal article" date="2008" name="J. Virol.">
        <title>Complete DNA sequences of two oka strain varicella-zoster virus genomes.</title>
        <authorList>
            <person name="Tillieux S.L."/>
            <person name="Halsey W.S."/>
            <person name="Thomas E.S."/>
            <person name="Voycik J.J."/>
            <person name="Sathe G.M."/>
            <person name="Vassilev V."/>
        </authorList>
    </citation>
    <scope>NUCLEOTIDE SEQUENCE [LARGE SCALE GENOMIC DNA]</scope>
    <source>
        <strain>Oka varicella vaccine VarilRix (V-Oka-GSK)</strain>
        <strain>Oka varicella vaccine Varivax (V-Oka-Merck)</strain>
    </source>
</reference>
<proteinExistence type="inferred from homology"/>